<feature type="chain" id="PRO_1000056815" description="Nucleotide-binding protein CLB_3433">
    <location>
        <begin position="1"/>
        <end position="294"/>
    </location>
</feature>
<feature type="binding site" evidence="1">
    <location>
        <begin position="8"/>
        <end position="15"/>
    </location>
    <ligand>
        <name>ATP</name>
        <dbReference type="ChEBI" id="CHEBI:30616"/>
    </ligand>
</feature>
<feature type="binding site" evidence="1">
    <location>
        <begin position="59"/>
        <end position="62"/>
    </location>
    <ligand>
        <name>GTP</name>
        <dbReference type="ChEBI" id="CHEBI:37565"/>
    </ligand>
</feature>
<proteinExistence type="inferred from homology"/>
<protein>
    <recommendedName>
        <fullName evidence="1">Nucleotide-binding protein CLB_3433</fullName>
    </recommendedName>
</protein>
<accession>A7FYX1</accession>
<dbReference type="EMBL" id="CP000726">
    <property type="protein sequence ID" value="ABS34691.1"/>
    <property type="molecule type" value="Genomic_DNA"/>
</dbReference>
<dbReference type="SMR" id="A7FYX1"/>
<dbReference type="KEGG" id="cba:CLB_3433"/>
<dbReference type="HOGENOM" id="CLU_059558_0_0_9"/>
<dbReference type="GO" id="GO:0005524">
    <property type="term" value="F:ATP binding"/>
    <property type="evidence" value="ECO:0007669"/>
    <property type="project" value="UniProtKB-UniRule"/>
</dbReference>
<dbReference type="GO" id="GO:0005525">
    <property type="term" value="F:GTP binding"/>
    <property type="evidence" value="ECO:0007669"/>
    <property type="project" value="UniProtKB-UniRule"/>
</dbReference>
<dbReference type="Gene3D" id="3.40.50.300">
    <property type="entry name" value="P-loop containing nucleotide triphosphate hydrolases"/>
    <property type="match status" value="1"/>
</dbReference>
<dbReference type="HAMAP" id="MF_00636">
    <property type="entry name" value="RapZ_like"/>
    <property type="match status" value="1"/>
</dbReference>
<dbReference type="InterPro" id="IPR027417">
    <property type="entry name" value="P-loop_NTPase"/>
</dbReference>
<dbReference type="InterPro" id="IPR005337">
    <property type="entry name" value="RapZ-like"/>
</dbReference>
<dbReference type="InterPro" id="IPR053930">
    <property type="entry name" value="RapZ-like_N"/>
</dbReference>
<dbReference type="InterPro" id="IPR053931">
    <property type="entry name" value="RapZ_C"/>
</dbReference>
<dbReference type="NCBIfam" id="NF003828">
    <property type="entry name" value="PRK05416.1"/>
    <property type="match status" value="1"/>
</dbReference>
<dbReference type="PANTHER" id="PTHR30448">
    <property type="entry name" value="RNASE ADAPTER PROTEIN RAPZ"/>
    <property type="match status" value="1"/>
</dbReference>
<dbReference type="PANTHER" id="PTHR30448:SF0">
    <property type="entry name" value="RNASE ADAPTER PROTEIN RAPZ"/>
    <property type="match status" value="1"/>
</dbReference>
<dbReference type="Pfam" id="PF22740">
    <property type="entry name" value="PapZ_C"/>
    <property type="match status" value="1"/>
</dbReference>
<dbReference type="Pfam" id="PF03668">
    <property type="entry name" value="RapZ-like_N"/>
    <property type="match status" value="1"/>
</dbReference>
<dbReference type="PIRSF" id="PIRSF005052">
    <property type="entry name" value="P-loopkin"/>
    <property type="match status" value="1"/>
</dbReference>
<dbReference type="SUPFAM" id="SSF52540">
    <property type="entry name" value="P-loop containing nucleoside triphosphate hydrolases"/>
    <property type="match status" value="1"/>
</dbReference>
<reference key="1">
    <citation type="journal article" date="2007" name="PLoS ONE">
        <title>Analysis of the neurotoxin complex genes in Clostridium botulinum A1-A4 and B1 strains: BoNT/A3, /Ba4 and /B1 clusters are located within plasmids.</title>
        <authorList>
            <person name="Smith T.J."/>
            <person name="Hill K.K."/>
            <person name="Foley B.T."/>
            <person name="Detter J.C."/>
            <person name="Munk A.C."/>
            <person name="Bruce D.C."/>
            <person name="Doggett N.A."/>
            <person name="Smith L.A."/>
            <person name="Marks J.D."/>
            <person name="Xie G."/>
            <person name="Brettin T.S."/>
        </authorList>
    </citation>
    <scope>NUCLEOTIDE SEQUENCE [LARGE SCALE GENOMIC DNA]</scope>
    <source>
        <strain>ATCC 19397 / Type A</strain>
    </source>
</reference>
<name>Y3433_CLOB1</name>
<organism>
    <name type="scientific">Clostridium botulinum (strain ATCC 19397 / Type A)</name>
    <dbReference type="NCBI Taxonomy" id="441770"/>
    <lineage>
        <taxon>Bacteria</taxon>
        <taxon>Bacillati</taxon>
        <taxon>Bacillota</taxon>
        <taxon>Clostridia</taxon>
        <taxon>Eubacteriales</taxon>
        <taxon>Clostridiaceae</taxon>
        <taxon>Clostridium</taxon>
    </lineage>
</organism>
<sequence length="294" mass="33739">MRFVIVTGLSGAGKTQAIRSLEDLGFFCVDNLPPTLIPKFAEACYQTEGKIKKIALVIDIRGGKFFDDLFESLKYLKEEGYKYEILFLDASDEVLIKRFKESRRKHPLSPDGRILNGISMERNRLREVKDRADNIINTSELATRELREAINEIYGEHDQIENQLIITVLSFGFKHGIPLDSDLVFDVRFLPNPYYIKELKQYSGKDKKVSDYVMSFDVTNKFVNRLENMLDFLIPNYFKEGKRQLIISIGCTGGRHRSVAIANAIYEGLKSKGHKVNIDHRDINEDIHKGGKKL</sequence>
<comment type="function">
    <text evidence="1">Displays ATPase and GTPase activities.</text>
</comment>
<comment type="similarity">
    <text evidence="1">Belongs to the RapZ-like family.</text>
</comment>
<keyword id="KW-0067">ATP-binding</keyword>
<keyword id="KW-0342">GTP-binding</keyword>
<keyword id="KW-0547">Nucleotide-binding</keyword>
<gene>
    <name type="ordered locus">CLB_3433</name>
</gene>
<evidence type="ECO:0000255" key="1">
    <source>
        <dbReference type="HAMAP-Rule" id="MF_00636"/>
    </source>
</evidence>